<comment type="function">
    <text evidence="1">Catalyzes the condensation of carbamoyl phosphate and aspartate to form carbamoyl aspartate and inorganic phosphate, the committed step in the de novo pyrimidine nucleotide biosynthesis pathway.</text>
</comment>
<comment type="catalytic activity">
    <reaction evidence="1">
        <text>carbamoyl phosphate + L-aspartate = N-carbamoyl-L-aspartate + phosphate + H(+)</text>
        <dbReference type="Rhea" id="RHEA:20013"/>
        <dbReference type="ChEBI" id="CHEBI:15378"/>
        <dbReference type="ChEBI" id="CHEBI:29991"/>
        <dbReference type="ChEBI" id="CHEBI:32814"/>
        <dbReference type="ChEBI" id="CHEBI:43474"/>
        <dbReference type="ChEBI" id="CHEBI:58228"/>
        <dbReference type="EC" id="2.1.3.2"/>
    </reaction>
</comment>
<comment type="pathway">
    <text evidence="1">Pyrimidine metabolism; UMP biosynthesis via de novo pathway; (S)-dihydroorotate from bicarbonate: step 2/3.</text>
</comment>
<comment type="subunit">
    <text evidence="1">Heterooligomer of catalytic and regulatory chains.</text>
</comment>
<comment type="similarity">
    <text evidence="1">Belongs to the aspartate/ornithine carbamoyltransferase superfamily. ATCase family.</text>
</comment>
<sequence length="316" mass="35884">MIKIFELKSIISIKDFERKDIDYILDEASKLEDIAKSKECCDELKGKILGLMFFEPSTRTRLSFETSMKRLGGNCIGIENTRSCSVSKGESIADTAKMFEGYSDALVIRHELEGVSKFISDIVDVPVINAGDGAGQHPTQTLLDLYTIKKELGQIDNLKIALVGDLKFGRTVHSLSNALGLYDNVELYFVAPKELRMPQEVLHDLNKKNIPYTEVDSIEEIIDKVDVLYVTRIQKERFGDLDEYLKIKGAYIVNKKMLEGKDVIVMHPLPRIDEIATDLDNTKHNKYFNQAFNAVPVRMAILKTLIKNNPKWNHIE</sequence>
<keyword id="KW-0665">Pyrimidine biosynthesis</keyword>
<keyword id="KW-0808">Transferase</keyword>
<gene>
    <name evidence="1" type="primary">pyrB</name>
    <name type="ordered locus">Msm_1263</name>
</gene>
<organism>
    <name type="scientific">Methanobrevibacter smithii (strain ATCC 35061 / DSM 861 / OCM 144 / PS)</name>
    <dbReference type="NCBI Taxonomy" id="420247"/>
    <lineage>
        <taxon>Archaea</taxon>
        <taxon>Methanobacteriati</taxon>
        <taxon>Methanobacteriota</taxon>
        <taxon>Methanomada group</taxon>
        <taxon>Methanobacteria</taxon>
        <taxon>Methanobacteriales</taxon>
        <taxon>Methanobacteriaceae</taxon>
        <taxon>Methanobrevibacter</taxon>
    </lineage>
</organism>
<feature type="chain" id="PRO_0000321186" description="Aspartate carbamoyltransferase catalytic subunit">
    <location>
        <begin position="1"/>
        <end position="316"/>
    </location>
</feature>
<feature type="binding site" evidence="1">
    <location>
        <position position="59"/>
    </location>
    <ligand>
        <name>carbamoyl phosphate</name>
        <dbReference type="ChEBI" id="CHEBI:58228"/>
    </ligand>
</feature>
<feature type="binding site" evidence="1">
    <location>
        <position position="60"/>
    </location>
    <ligand>
        <name>carbamoyl phosphate</name>
        <dbReference type="ChEBI" id="CHEBI:58228"/>
    </ligand>
</feature>
<feature type="binding site" evidence="1">
    <location>
        <position position="88"/>
    </location>
    <ligand>
        <name>L-aspartate</name>
        <dbReference type="ChEBI" id="CHEBI:29991"/>
    </ligand>
</feature>
<feature type="binding site" evidence="1">
    <location>
        <position position="109"/>
    </location>
    <ligand>
        <name>carbamoyl phosphate</name>
        <dbReference type="ChEBI" id="CHEBI:58228"/>
    </ligand>
</feature>
<feature type="binding site" evidence="1">
    <location>
        <position position="137"/>
    </location>
    <ligand>
        <name>carbamoyl phosphate</name>
        <dbReference type="ChEBI" id="CHEBI:58228"/>
    </ligand>
</feature>
<feature type="binding site" evidence="1">
    <location>
        <position position="140"/>
    </location>
    <ligand>
        <name>carbamoyl phosphate</name>
        <dbReference type="ChEBI" id="CHEBI:58228"/>
    </ligand>
</feature>
<feature type="binding site" evidence="1">
    <location>
        <position position="170"/>
    </location>
    <ligand>
        <name>L-aspartate</name>
        <dbReference type="ChEBI" id="CHEBI:29991"/>
    </ligand>
</feature>
<feature type="binding site" evidence="1">
    <location>
        <position position="232"/>
    </location>
    <ligand>
        <name>L-aspartate</name>
        <dbReference type="ChEBI" id="CHEBI:29991"/>
    </ligand>
</feature>
<feature type="binding site" evidence="1">
    <location>
        <position position="269"/>
    </location>
    <ligand>
        <name>carbamoyl phosphate</name>
        <dbReference type="ChEBI" id="CHEBI:58228"/>
    </ligand>
</feature>
<feature type="binding site" evidence="1">
    <location>
        <position position="270"/>
    </location>
    <ligand>
        <name>carbamoyl phosphate</name>
        <dbReference type="ChEBI" id="CHEBI:58228"/>
    </ligand>
</feature>
<proteinExistence type="inferred from homology"/>
<name>PYRB_METS3</name>
<protein>
    <recommendedName>
        <fullName evidence="1">Aspartate carbamoyltransferase catalytic subunit</fullName>
        <ecNumber evidence="1">2.1.3.2</ecNumber>
    </recommendedName>
    <alternativeName>
        <fullName evidence="1">Aspartate transcarbamylase</fullName>
        <shortName evidence="1">ATCase</shortName>
    </alternativeName>
</protein>
<evidence type="ECO:0000255" key="1">
    <source>
        <dbReference type="HAMAP-Rule" id="MF_00001"/>
    </source>
</evidence>
<dbReference type="EC" id="2.1.3.2" evidence="1"/>
<dbReference type="EMBL" id="CP000678">
    <property type="protein sequence ID" value="ABQ87468.1"/>
    <property type="molecule type" value="Genomic_DNA"/>
</dbReference>
<dbReference type="RefSeq" id="WP_011954395.1">
    <property type="nucleotide sequence ID" value="NZ_CP117965.1"/>
</dbReference>
<dbReference type="SMR" id="A5UMP0"/>
<dbReference type="STRING" id="420247.Msm_1263"/>
<dbReference type="EnsemblBacteria" id="ABQ87468">
    <property type="protein sequence ID" value="ABQ87468"/>
    <property type="gene ID" value="Msm_1263"/>
</dbReference>
<dbReference type="GeneID" id="78817916"/>
<dbReference type="KEGG" id="msi:Msm_1263"/>
<dbReference type="PATRIC" id="fig|420247.28.peg.1261"/>
<dbReference type="eggNOG" id="arCOG00911">
    <property type="taxonomic scope" value="Archaea"/>
</dbReference>
<dbReference type="HOGENOM" id="CLU_043846_1_2_2"/>
<dbReference type="UniPathway" id="UPA00070">
    <property type="reaction ID" value="UER00116"/>
</dbReference>
<dbReference type="Proteomes" id="UP000001992">
    <property type="component" value="Chromosome"/>
</dbReference>
<dbReference type="GO" id="GO:0016597">
    <property type="term" value="F:amino acid binding"/>
    <property type="evidence" value="ECO:0007669"/>
    <property type="project" value="InterPro"/>
</dbReference>
<dbReference type="GO" id="GO:0004070">
    <property type="term" value="F:aspartate carbamoyltransferase activity"/>
    <property type="evidence" value="ECO:0007669"/>
    <property type="project" value="UniProtKB-UniRule"/>
</dbReference>
<dbReference type="GO" id="GO:0006207">
    <property type="term" value="P:'de novo' pyrimidine nucleobase biosynthetic process"/>
    <property type="evidence" value="ECO:0007669"/>
    <property type="project" value="InterPro"/>
</dbReference>
<dbReference type="GO" id="GO:0044205">
    <property type="term" value="P:'de novo' UMP biosynthetic process"/>
    <property type="evidence" value="ECO:0007669"/>
    <property type="project" value="UniProtKB-UniRule"/>
</dbReference>
<dbReference type="GO" id="GO:0006520">
    <property type="term" value="P:amino acid metabolic process"/>
    <property type="evidence" value="ECO:0007669"/>
    <property type="project" value="InterPro"/>
</dbReference>
<dbReference type="FunFam" id="3.40.50.1370:FF:000002">
    <property type="entry name" value="Aspartate carbamoyltransferase 2"/>
    <property type="match status" value="1"/>
</dbReference>
<dbReference type="Gene3D" id="3.40.50.1370">
    <property type="entry name" value="Aspartate/ornithine carbamoyltransferase"/>
    <property type="match status" value="2"/>
</dbReference>
<dbReference type="HAMAP" id="MF_00001">
    <property type="entry name" value="Asp_carb_tr"/>
    <property type="match status" value="1"/>
</dbReference>
<dbReference type="InterPro" id="IPR006132">
    <property type="entry name" value="Asp/Orn_carbamoyltranf_P-bd"/>
</dbReference>
<dbReference type="InterPro" id="IPR006130">
    <property type="entry name" value="Asp/Orn_carbamoylTrfase"/>
</dbReference>
<dbReference type="InterPro" id="IPR036901">
    <property type="entry name" value="Asp/Orn_carbamoylTrfase_sf"/>
</dbReference>
<dbReference type="InterPro" id="IPR002082">
    <property type="entry name" value="Asp_carbamoyltransf"/>
</dbReference>
<dbReference type="InterPro" id="IPR006131">
    <property type="entry name" value="Asp_carbamoyltransf_Asp/Orn-bd"/>
</dbReference>
<dbReference type="NCBIfam" id="TIGR00670">
    <property type="entry name" value="asp_carb_tr"/>
    <property type="match status" value="1"/>
</dbReference>
<dbReference type="NCBIfam" id="NF002032">
    <property type="entry name" value="PRK00856.1"/>
    <property type="match status" value="1"/>
</dbReference>
<dbReference type="PANTHER" id="PTHR45753:SF6">
    <property type="entry name" value="ASPARTATE CARBAMOYLTRANSFERASE"/>
    <property type="match status" value="1"/>
</dbReference>
<dbReference type="PANTHER" id="PTHR45753">
    <property type="entry name" value="ORNITHINE CARBAMOYLTRANSFERASE, MITOCHONDRIAL"/>
    <property type="match status" value="1"/>
</dbReference>
<dbReference type="Pfam" id="PF00185">
    <property type="entry name" value="OTCace"/>
    <property type="match status" value="1"/>
</dbReference>
<dbReference type="Pfam" id="PF02729">
    <property type="entry name" value="OTCace_N"/>
    <property type="match status" value="1"/>
</dbReference>
<dbReference type="PRINTS" id="PR00100">
    <property type="entry name" value="AOTCASE"/>
</dbReference>
<dbReference type="PRINTS" id="PR00101">
    <property type="entry name" value="ATCASE"/>
</dbReference>
<dbReference type="SUPFAM" id="SSF53671">
    <property type="entry name" value="Aspartate/ornithine carbamoyltransferase"/>
    <property type="match status" value="1"/>
</dbReference>
<dbReference type="PROSITE" id="PS00097">
    <property type="entry name" value="CARBAMOYLTRANSFERASE"/>
    <property type="match status" value="1"/>
</dbReference>
<reference key="1">
    <citation type="journal article" date="2007" name="Proc. Natl. Acad. Sci. U.S.A.">
        <title>Genomic and metabolic adaptations of Methanobrevibacter smithii to the human gut.</title>
        <authorList>
            <person name="Samuel B.S."/>
            <person name="Hansen E.E."/>
            <person name="Manchester J.K."/>
            <person name="Coutinho P.M."/>
            <person name="Henrissat B."/>
            <person name="Fulton R."/>
            <person name="Latreille P."/>
            <person name="Kim K."/>
            <person name="Wilson R.K."/>
            <person name="Gordon J.I."/>
        </authorList>
    </citation>
    <scope>NUCLEOTIDE SEQUENCE [LARGE SCALE GENOMIC DNA]</scope>
    <source>
        <strain>ATCC 35061 / DSM 861 / OCM 144 / PS</strain>
    </source>
</reference>
<accession>A5UMP0</accession>